<organism>
    <name type="scientific">Cupriavidus pinatubonensis (strain JMP 134 / LMG 1197)</name>
    <name type="common">Cupriavidus necator (strain JMP 134)</name>
    <dbReference type="NCBI Taxonomy" id="264198"/>
    <lineage>
        <taxon>Bacteria</taxon>
        <taxon>Pseudomonadati</taxon>
        <taxon>Pseudomonadota</taxon>
        <taxon>Betaproteobacteria</taxon>
        <taxon>Burkholderiales</taxon>
        <taxon>Burkholderiaceae</taxon>
        <taxon>Cupriavidus</taxon>
    </lineage>
</organism>
<dbReference type="EMBL" id="CP000090">
    <property type="protein sequence ID" value="AAZ60289.1"/>
    <property type="molecule type" value="Genomic_DNA"/>
</dbReference>
<dbReference type="SMR" id="Q473Z4"/>
<dbReference type="STRING" id="264198.Reut_A0910"/>
<dbReference type="KEGG" id="reu:Reut_A0910"/>
<dbReference type="eggNOG" id="COG3028">
    <property type="taxonomic scope" value="Bacteria"/>
</dbReference>
<dbReference type="HOGENOM" id="CLU_106757_1_0_4"/>
<dbReference type="OrthoDB" id="5293604at2"/>
<dbReference type="GO" id="GO:0005829">
    <property type="term" value="C:cytosol"/>
    <property type="evidence" value="ECO:0007669"/>
    <property type="project" value="TreeGrafter"/>
</dbReference>
<dbReference type="GO" id="GO:0043022">
    <property type="term" value="F:ribosome binding"/>
    <property type="evidence" value="ECO:0007669"/>
    <property type="project" value="UniProtKB-UniRule"/>
</dbReference>
<dbReference type="GO" id="GO:0019843">
    <property type="term" value="F:rRNA binding"/>
    <property type="evidence" value="ECO:0007669"/>
    <property type="project" value="UniProtKB-UniRule"/>
</dbReference>
<dbReference type="GO" id="GO:1902626">
    <property type="term" value="P:assembly of large subunit precursor of preribosome"/>
    <property type="evidence" value="ECO:0007669"/>
    <property type="project" value="UniProtKB-UniRule"/>
</dbReference>
<dbReference type="CDD" id="cd16331">
    <property type="entry name" value="YjgA-like"/>
    <property type="match status" value="1"/>
</dbReference>
<dbReference type="Gene3D" id="1.10.60.30">
    <property type="entry name" value="PSPTO4464-like domains"/>
    <property type="match status" value="2"/>
</dbReference>
<dbReference type="HAMAP" id="MF_00765">
    <property type="entry name" value="DarP"/>
    <property type="match status" value="1"/>
</dbReference>
<dbReference type="InterPro" id="IPR006839">
    <property type="entry name" value="DarP"/>
</dbReference>
<dbReference type="InterPro" id="IPR023153">
    <property type="entry name" value="DarP_sf"/>
</dbReference>
<dbReference type="NCBIfam" id="NF003593">
    <property type="entry name" value="PRK05255.1-1"/>
    <property type="match status" value="1"/>
</dbReference>
<dbReference type="PANTHER" id="PTHR38101">
    <property type="entry name" value="UPF0307 PROTEIN YJGA"/>
    <property type="match status" value="1"/>
</dbReference>
<dbReference type="PANTHER" id="PTHR38101:SF1">
    <property type="entry name" value="UPF0307 PROTEIN YJGA"/>
    <property type="match status" value="1"/>
</dbReference>
<dbReference type="Pfam" id="PF04751">
    <property type="entry name" value="DarP"/>
    <property type="match status" value="1"/>
</dbReference>
<dbReference type="PIRSF" id="PIRSF016183">
    <property type="entry name" value="UCP016183"/>
    <property type="match status" value="1"/>
</dbReference>
<dbReference type="SUPFAM" id="SSF158710">
    <property type="entry name" value="PSPTO4464-like"/>
    <property type="match status" value="1"/>
</dbReference>
<proteinExistence type="inferred from homology"/>
<name>DARP_CUPPJ</name>
<evidence type="ECO:0000255" key="1">
    <source>
        <dbReference type="HAMAP-Rule" id="MF_00765"/>
    </source>
</evidence>
<evidence type="ECO:0000256" key="2">
    <source>
        <dbReference type="SAM" id="MobiDB-lite"/>
    </source>
</evidence>
<reference key="1">
    <citation type="journal article" date="2010" name="PLoS ONE">
        <title>The complete multipartite genome sequence of Cupriavidus necator JMP134, a versatile pollutant degrader.</title>
        <authorList>
            <person name="Lykidis A."/>
            <person name="Perez-Pantoja D."/>
            <person name="Ledger T."/>
            <person name="Mavromatis K."/>
            <person name="Anderson I.J."/>
            <person name="Ivanova N.N."/>
            <person name="Hooper S.D."/>
            <person name="Lapidus A."/>
            <person name="Lucas S."/>
            <person name="Gonzalez B."/>
            <person name="Kyrpides N.C."/>
        </authorList>
    </citation>
    <scope>NUCLEOTIDE SEQUENCE [LARGE SCALE GENOMIC DNA]</scope>
    <source>
        <strain>JMP134 / LMG 1197</strain>
    </source>
</reference>
<feature type="chain" id="PRO_0000257636" description="Dual-action ribosomal maturation protein DarP">
    <location>
        <begin position="1"/>
        <end position="203"/>
    </location>
</feature>
<feature type="region of interest" description="Disordered" evidence="2">
    <location>
        <begin position="1"/>
        <end position="39"/>
    </location>
</feature>
<feature type="compositionally biased region" description="Polar residues" evidence="2">
    <location>
        <begin position="1"/>
        <end position="13"/>
    </location>
</feature>
<feature type="compositionally biased region" description="Basic and acidic residues" evidence="2">
    <location>
        <begin position="27"/>
        <end position="39"/>
    </location>
</feature>
<comment type="function">
    <text evidence="1">Member of a network of 50S ribosomal subunit biogenesis factors which assembles along the 30S-50S interface, preventing incorrect 23S rRNA structures from forming. Promotes peptidyl transferase center (PTC) maturation.</text>
</comment>
<comment type="subcellular location">
    <subcellularLocation>
        <location evidence="1">Cytoplasm</location>
    </subcellularLocation>
    <text evidence="1">Associates with late stage pre-50S ribosomal subunits.</text>
</comment>
<comment type="similarity">
    <text evidence="1">Belongs to the DarP family.</text>
</comment>
<accession>Q473Z4</accession>
<protein>
    <recommendedName>
        <fullName evidence="1">Dual-action ribosomal maturation protein DarP</fullName>
    </recommendedName>
    <alternativeName>
        <fullName evidence="1">Large ribosomal subunit assembly factor DarP</fullName>
    </alternativeName>
</protein>
<gene>
    <name evidence="1" type="primary">darP</name>
    <name type="ordered locus">Reut_A0910</name>
</gene>
<keyword id="KW-0963">Cytoplasm</keyword>
<keyword id="KW-0690">Ribosome biogenesis</keyword>
<keyword id="KW-0694">RNA-binding</keyword>
<keyword id="KW-0699">rRNA-binding</keyword>
<sequence length="203" mass="22754">MQPMTRNSRNSPGSRFPGAFAPEPDMDEPKSKSQKKRDMTALQALGAELEALAKDRLARVPMPEALADAIHEARRTTSHEGKRRQMQFVGKVMRGLEDDEVEAIRAALEGFKGTSKAETARMHLIERWRELLLADDAALTRFLAEHPGTDVQTVRNIIRSARREKELGKPPRYFRELFQAIKAALDEKDSAAGEQPPTPEPEA</sequence>